<proteinExistence type="inferred from homology"/>
<comment type="function">
    <text evidence="1">Could be a mediator in iron transactions between iron acquisition and iron-requiring processes, such as synthesis and/or repair of Fe-S clusters in biosynthetic enzymes.</text>
</comment>
<comment type="similarity">
    <text evidence="1">Belongs to the Fe(2+)-trafficking protein family.</text>
</comment>
<evidence type="ECO:0000255" key="1">
    <source>
        <dbReference type="HAMAP-Rule" id="MF_00686"/>
    </source>
</evidence>
<reference key="1">
    <citation type="journal article" date="2003" name="Nat. Genet.">
        <title>Comparative analysis of the genome sequences of Bordetella pertussis, Bordetella parapertussis and Bordetella bronchiseptica.</title>
        <authorList>
            <person name="Parkhill J."/>
            <person name="Sebaihia M."/>
            <person name="Preston A."/>
            <person name="Murphy L.D."/>
            <person name="Thomson N.R."/>
            <person name="Harris D.E."/>
            <person name="Holden M.T.G."/>
            <person name="Churcher C.M."/>
            <person name="Bentley S.D."/>
            <person name="Mungall K.L."/>
            <person name="Cerdeno-Tarraga A.-M."/>
            <person name="Temple L."/>
            <person name="James K.D."/>
            <person name="Harris B."/>
            <person name="Quail M.A."/>
            <person name="Achtman M."/>
            <person name="Atkin R."/>
            <person name="Baker S."/>
            <person name="Basham D."/>
            <person name="Bason N."/>
            <person name="Cherevach I."/>
            <person name="Chillingworth T."/>
            <person name="Collins M."/>
            <person name="Cronin A."/>
            <person name="Davis P."/>
            <person name="Doggett J."/>
            <person name="Feltwell T."/>
            <person name="Goble A."/>
            <person name="Hamlin N."/>
            <person name="Hauser H."/>
            <person name="Holroyd S."/>
            <person name="Jagels K."/>
            <person name="Leather S."/>
            <person name="Moule S."/>
            <person name="Norberczak H."/>
            <person name="O'Neil S."/>
            <person name="Ormond D."/>
            <person name="Price C."/>
            <person name="Rabbinowitsch E."/>
            <person name="Rutter S."/>
            <person name="Sanders M."/>
            <person name="Saunders D."/>
            <person name="Seeger K."/>
            <person name="Sharp S."/>
            <person name="Simmonds M."/>
            <person name="Skelton J."/>
            <person name="Squares R."/>
            <person name="Squares S."/>
            <person name="Stevens K."/>
            <person name="Unwin L."/>
            <person name="Whitehead S."/>
            <person name="Barrell B.G."/>
            <person name="Maskell D.J."/>
        </authorList>
    </citation>
    <scope>NUCLEOTIDE SEQUENCE [LARGE SCALE GENOMIC DNA]</scope>
    <source>
        <strain>ATCC BAA-588 / NCTC 13252 / RB50</strain>
    </source>
</reference>
<protein>
    <recommendedName>
        <fullName evidence="1">Probable Fe(2+)-trafficking protein</fullName>
    </recommendedName>
</protein>
<name>FETP_BORBR</name>
<organism>
    <name type="scientific">Bordetella bronchiseptica (strain ATCC BAA-588 / NCTC 13252 / RB50)</name>
    <name type="common">Alcaligenes bronchisepticus</name>
    <dbReference type="NCBI Taxonomy" id="257310"/>
    <lineage>
        <taxon>Bacteria</taxon>
        <taxon>Pseudomonadati</taxon>
        <taxon>Pseudomonadota</taxon>
        <taxon>Betaproteobacteria</taxon>
        <taxon>Burkholderiales</taxon>
        <taxon>Alcaligenaceae</taxon>
        <taxon>Bordetella</taxon>
    </lineage>
</organism>
<sequence length="90" mass="10568">MSRIVNCVKLKREAEGLDFPPYPGELGTRIWQQISKEAWEEWKQIQTRLVNENRLNLADARARKYLQQQMERFLFEDGTVEAQGYVPPSA</sequence>
<keyword id="KW-0408">Iron</keyword>
<dbReference type="EMBL" id="BX640447">
    <property type="protein sequence ID" value="CAE33897.1"/>
    <property type="molecule type" value="Genomic_DNA"/>
</dbReference>
<dbReference type="RefSeq" id="WP_003813239.1">
    <property type="nucleotide sequence ID" value="NC_002927.3"/>
</dbReference>
<dbReference type="SMR" id="Q7WH06"/>
<dbReference type="KEGG" id="bbr:BB3405"/>
<dbReference type="eggNOG" id="COG2924">
    <property type="taxonomic scope" value="Bacteria"/>
</dbReference>
<dbReference type="HOGENOM" id="CLU_170994_0_0_4"/>
<dbReference type="Proteomes" id="UP000001027">
    <property type="component" value="Chromosome"/>
</dbReference>
<dbReference type="GO" id="GO:0005829">
    <property type="term" value="C:cytosol"/>
    <property type="evidence" value="ECO:0007669"/>
    <property type="project" value="TreeGrafter"/>
</dbReference>
<dbReference type="GO" id="GO:0005506">
    <property type="term" value="F:iron ion binding"/>
    <property type="evidence" value="ECO:0007669"/>
    <property type="project" value="UniProtKB-UniRule"/>
</dbReference>
<dbReference type="GO" id="GO:0034599">
    <property type="term" value="P:cellular response to oxidative stress"/>
    <property type="evidence" value="ECO:0007669"/>
    <property type="project" value="TreeGrafter"/>
</dbReference>
<dbReference type="FunFam" id="1.10.3880.10:FF:000001">
    <property type="entry name" value="Probable Fe(2+)-trafficking protein"/>
    <property type="match status" value="1"/>
</dbReference>
<dbReference type="Gene3D" id="1.10.3880.10">
    <property type="entry name" value="Fe(II) trafficking protein YggX"/>
    <property type="match status" value="1"/>
</dbReference>
<dbReference type="HAMAP" id="MF_00686">
    <property type="entry name" value="Fe_traffic_YggX"/>
    <property type="match status" value="1"/>
</dbReference>
<dbReference type="InterPro" id="IPR007457">
    <property type="entry name" value="Fe_traffick_prot_YggX"/>
</dbReference>
<dbReference type="InterPro" id="IPR036766">
    <property type="entry name" value="Fe_traffick_prot_YggX_sf"/>
</dbReference>
<dbReference type="NCBIfam" id="NF003817">
    <property type="entry name" value="PRK05408.1"/>
    <property type="match status" value="1"/>
</dbReference>
<dbReference type="PANTHER" id="PTHR36965">
    <property type="entry name" value="FE(2+)-TRAFFICKING PROTEIN-RELATED"/>
    <property type="match status" value="1"/>
</dbReference>
<dbReference type="PANTHER" id="PTHR36965:SF1">
    <property type="entry name" value="FE(2+)-TRAFFICKING PROTEIN-RELATED"/>
    <property type="match status" value="1"/>
</dbReference>
<dbReference type="Pfam" id="PF04362">
    <property type="entry name" value="Iron_traffic"/>
    <property type="match status" value="1"/>
</dbReference>
<dbReference type="PIRSF" id="PIRSF029827">
    <property type="entry name" value="Fe_traffic_YggX"/>
    <property type="match status" value="1"/>
</dbReference>
<dbReference type="SUPFAM" id="SSF111148">
    <property type="entry name" value="YggX-like"/>
    <property type="match status" value="1"/>
</dbReference>
<gene>
    <name type="ordered locus">BB3405</name>
</gene>
<feature type="chain" id="PRO_0000214467" description="Probable Fe(2+)-trafficking protein">
    <location>
        <begin position="1"/>
        <end position="90"/>
    </location>
</feature>
<accession>Q7WH06</accession>